<protein>
    <recommendedName>
        <fullName evidence="1">Large ribosomal subunit protein uL14c</fullName>
    </recommendedName>
    <alternativeName>
        <fullName evidence="2">50S ribosomal protein L14, chloroplastic</fullName>
    </alternativeName>
</protein>
<proteinExistence type="inferred from homology"/>
<comment type="function">
    <text evidence="1">Binds to 23S rRNA.</text>
</comment>
<comment type="subunit">
    <text evidence="1">Part of the 50S ribosomal subunit.</text>
</comment>
<comment type="subcellular location">
    <subcellularLocation>
        <location>Plastid</location>
        <location>Chloroplast</location>
    </subcellularLocation>
</comment>
<comment type="similarity">
    <text evidence="1">Belongs to the universal ribosomal protein uL14 family.</text>
</comment>
<name>RK14_MANES</name>
<organism>
    <name type="scientific">Manihot esculenta</name>
    <name type="common">Cassava</name>
    <name type="synonym">Jatropha manihot</name>
    <dbReference type="NCBI Taxonomy" id="3983"/>
    <lineage>
        <taxon>Eukaryota</taxon>
        <taxon>Viridiplantae</taxon>
        <taxon>Streptophyta</taxon>
        <taxon>Embryophyta</taxon>
        <taxon>Tracheophyta</taxon>
        <taxon>Spermatophyta</taxon>
        <taxon>Magnoliopsida</taxon>
        <taxon>eudicotyledons</taxon>
        <taxon>Gunneridae</taxon>
        <taxon>Pentapetalae</taxon>
        <taxon>rosids</taxon>
        <taxon>fabids</taxon>
        <taxon>Malpighiales</taxon>
        <taxon>Euphorbiaceae</taxon>
        <taxon>Crotonoideae</taxon>
        <taxon>Manihoteae</taxon>
        <taxon>Manihot</taxon>
    </lineage>
</organism>
<reference key="1">
    <citation type="journal article" date="2008" name="Theor. Appl. Genet.">
        <title>The complete nucleotide sequence of the cassava (Manihot esculenta) chloroplast genome and the evolution of atpF in Malpighiales: RNA editing and multiple losses of a group II intron.</title>
        <authorList>
            <person name="Daniell H."/>
            <person name="Wurdack K.J."/>
            <person name="Kanagaraj A."/>
            <person name="Lee S.-B."/>
            <person name="Saski C."/>
            <person name="Jansen R.K."/>
        </authorList>
    </citation>
    <scope>NUCLEOTIDE SEQUENCE [LARGE SCALE GENOMIC DNA]</scope>
    <source>
        <strain>cv. TME3</strain>
    </source>
</reference>
<feature type="chain" id="PRO_0000355890" description="Large ribosomal subunit protein uL14c">
    <location>
        <begin position="1"/>
        <end position="122"/>
    </location>
</feature>
<accession>B1NWI6</accession>
<sequence>MIQSQTHLNVADNSGARELMCIRIIGTSNRRYAHIGDVIVAVIKEAAPNSPLERSEVIRAVIVRTCKELKRDNGMIIRYDDNAAVVIDQEGNPKGTRIFGAIARELRQLNFTKIVSLAPEVL</sequence>
<geneLocation type="chloroplast"/>
<evidence type="ECO:0000255" key="1">
    <source>
        <dbReference type="HAMAP-Rule" id="MF_01367"/>
    </source>
</evidence>
<evidence type="ECO:0000305" key="2"/>
<gene>
    <name evidence="1" type="primary">rpl14</name>
</gene>
<dbReference type="EMBL" id="EU117376">
    <property type="protein sequence ID" value="ABV66190.1"/>
    <property type="molecule type" value="Genomic_DNA"/>
</dbReference>
<dbReference type="RefSeq" id="YP_001718473.1">
    <property type="nucleotide sequence ID" value="NC_010433.1"/>
</dbReference>
<dbReference type="SMR" id="B1NWI6"/>
<dbReference type="GeneID" id="5999954"/>
<dbReference type="KEGG" id="mesc:5999954"/>
<dbReference type="OrthoDB" id="813207at2759"/>
<dbReference type="GO" id="GO:0009507">
    <property type="term" value="C:chloroplast"/>
    <property type="evidence" value="ECO:0007669"/>
    <property type="project" value="UniProtKB-SubCell"/>
</dbReference>
<dbReference type="GO" id="GO:0015934">
    <property type="term" value="C:large ribosomal subunit"/>
    <property type="evidence" value="ECO:0007669"/>
    <property type="project" value="InterPro"/>
</dbReference>
<dbReference type="GO" id="GO:0019843">
    <property type="term" value="F:rRNA binding"/>
    <property type="evidence" value="ECO:0007669"/>
    <property type="project" value="UniProtKB-UniRule"/>
</dbReference>
<dbReference type="GO" id="GO:0003735">
    <property type="term" value="F:structural constituent of ribosome"/>
    <property type="evidence" value="ECO:0007669"/>
    <property type="project" value="InterPro"/>
</dbReference>
<dbReference type="GO" id="GO:0006412">
    <property type="term" value="P:translation"/>
    <property type="evidence" value="ECO:0007669"/>
    <property type="project" value="UniProtKB-UniRule"/>
</dbReference>
<dbReference type="CDD" id="cd00337">
    <property type="entry name" value="Ribosomal_uL14"/>
    <property type="match status" value="1"/>
</dbReference>
<dbReference type="FunFam" id="2.40.150.20:FF:000002">
    <property type="entry name" value="50S ribosomal protein L14, chloroplastic"/>
    <property type="match status" value="1"/>
</dbReference>
<dbReference type="Gene3D" id="2.40.150.20">
    <property type="entry name" value="Ribosomal protein L14"/>
    <property type="match status" value="1"/>
</dbReference>
<dbReference type="HAMAP" id="MF_01367">
    <property type="entry name" value="Ribosomal_uL14"/>
    <property type="match status" value="1"/>
</dbReference>
<dbReference type="InterPro" id="IPR000218">
    <property type="entry name" value="Ribosomal_uL14"/>
</dbReference>
<dbReference type="InterPro" id="IPR005745">
    <property type="entry name" value="Ribosomal_uL14_bac-type"/>
</dbReference>
<dbReference type="InterPro" id="IPR019972">
    <property type="entry name" value="Ribosomal_uL14_CS"/>
</dbReference>
<dbReference type="InterPro" id="IPR036853">
    <property type="entry name" value="Ribosomal_uL14_sf"/>
</dbReference>
<dbReference type="NCBIfam" id="TIGR01067">
    <property type="entry name" value="rplN_bact"/>
    <property type="match status" value="1"/>
</dbReference>
<dbReference type="PANTHER" id="PTHR11761">
    <property type="entry name" value="50S/60S RIBOSOMAL PROTEIN L14/L23"/>
    <property type="match status" value="1"/>
</dbReference>
<dbReference type="PANTHER" id="PTHR11761:SF3">
    <property type="entry name" value="LARGE RIBOSOMAL SUBUNIT PROTEIN UL14M"/>
    <property type="match status" value="1"/>
</dbReference>
<dbReference type="Pfam" id="PF00238">
    <property type="entry name" value="Ribosomal_L14"/>
    <property type="match status" value="1"/>
</dbReference>
<dbReference type="SMART" id="SM01374">
    <property type="entry name" value="Ribosomal_L14"/>
    <property type="match status" value="1"/>
</dbReference>
<dbReference type="SUPFAM" id="SSF50193">
    <property type="entry name" value="Ribosomal protein L14"/>
    <property type="match status" value="1"/>
</dbReference>
<dbReference type="PROSITE" id="PS00049">
    <property type="entry name" value="RIBOSOMAL_L14"/>
    <property type="match status" value="1"/>
</dbReference>
<keyword id="KW-0150">Chloroplast</keyword>
<keyword id="KW-0934">Plastid</keyword>
<keyword id="KW-0687">Ribonucleoprotein</keyword>
<keyword id="KW-0689">Ribosomal protein</keyword>
<keyword id="KW-0694">RNA-binding</keyword>
<keyword id="KW-0699">rRNA-binding</keyword>